<organism>
    <name type="scientific">Homo sapiens</name>
    <name type="common">Human</name>
    <dbReference type="NCBI Taxonomy" id="9606"/>
    <lineage>
        <taxon>Eukaryota</taxon>
        <taxon>Metazoa</taxon>
        <taxon>Chordata</taxon>
        <taxon>Craniata</taxon>
        <taxon>Vertebrata</taxon>
        <taxon>Euteleostomi</taxon>
        <taxon>Mammalia</taxon>
        <taxon>Eutheria</taxon>
        <taxon>Euarchontoglires</taxon>
        <taxon>Primates</taxon>
        <taxon>Haplorrhini</taxon>
        <taxon>Catarrhini</taxon>
        <taxon>Hominidae</taxon>
        <taxon>Homo</taxon>
    </lineage>
</organism>
<accession>P00748</accession>
<accession>P78339</accession>
<comment type="function">
    <text evidence="20 21 33">Factor XII is a serum glycoprotein that participates in the initiation of blood coagulation, fibrinolysis, and the generation of bradykinin and angiotensin. Prekallikrein is cleaved by factor XII to form kallikrein, which then cleaves factor XII first to alpha-factor XIIa and then trypsin cleaves it to beta-factor XIIa. Alpha-factor XIIa activates factor XI to factor XIa (PubMed:2019570, PubMed:21304106, PubMed:8427954).</text>
</comment>
<comment type="catalytic activity">
    <reaction evidence="20 33">
        <text>Selective cleavage of Arg-|-Ile bonds in factor VII to form factor VIIa and factor XI to form factor XIa.</text>
        <dbReference type="EC" id="3.4.21.38"/>
    </reaction>
</comment>
<comment type="activity regulation">
    <text evidence="33">Activity is promoted in the presence of negatively charged surfaces.</text>
</comment>
<comment type="subunit">
    <text evidence="14 15 19 21 27 28">Interacts with HRG; the interaction, which is enhanced in the presence of zinc ions and inhibited by heparin-binding, inhibits factor XII autoactivation and contact-initiated coagulation.(PubMed:21304106) Interacts (inactive and activated) with D7L2, an anticoagulant protein from Anopheles gambiae (PubMed:35460690). Interacts (activated) with iripin-8, a serine protease inhibitor from Ixodes ricinus saliva (PubMed:34502392). Interacts (inactive and activated) (via amino acids 1-77) with triafestin-1 and triafestin-2, anticoagulant proteins from Triatoma infestans (PubMed:17645545). Interacts (inactive and activated) (via amino acids 1-77) with short form salivary protein D7R1, an anticoagulant protein from Anopheles stephensi (PubMed:17645545). Interacts (inactive and activated) (via fibronectin type II domain) with haemaphysalin, an anticoagulant protein from Haemaphysalis longicornis (PubMed:15711755, PubMed:16169873).</text>
</comment>
<comment type="interaction">
    <interactant intactId="EBI-6378830">
        <id>P00748</id>
    </interactant>
    <interactant intactId="EBI-77613">
        <id>P05067</id>
        <label>APP</label>
    </interactant>
    <organismsDiffer>false</organismsDiffer>
    <experiments>3</experiments>
</comment>
<comment type="interaction">
    <interactant intactId="EBI-6378830">
        <id>P00748</id>
    </interactant>
    <interactant intactId="EBI-347528">
        <id>Q07021</id>
        <label>C1QBP</label>
    </interactant>
    <organismsDiffer>false</organismsDiffer>
    <experiments>2</experiments>
</comment>
<comment type="interaction">
    <interactant intactId="EBI-6378830">
        <id>P00748</id>
    </interactant>
    <interactant intactId="EBI-21591415">
        <id>P13473-2</id>
        <label>LAMP2</label>
    </interactant>
    <organismsDiffer>false</organismsDiffer>
    <experiments>3</experiments>
</comment>
<comment type="subcellular location">
    <subcellularLocation>
        <location>Secreted</location>
    </subcellularLocation>
</comment>
<comment type="PTM">
    <text>Factor XII is activated by kallikrein in alpha-factor XIIa, which is further converted by trypsin into beta-factor XIIa. Alpha-factor XIIa is composed of an NH2-terminal heavy chain, called coagulation factor XIIa heavy chain, and a COOH-terminal light chain, called coagulation factor XIIa light chain, connected by a disulfide bond. Beta-factor XIIa is composed of 2 chains linked by a disulfide bond, an N-terminal nonapeptide, called beta-factor XIIa part 1, and coagulation factor XIIa light chain, also known in this context as beta-factor XIIa part 2.</text>
</comment>
<comment type="PTM">
    <text evidence="10 12 16 31">O- and N-glycosylated. The O-linked polysaccharides were not identified, but are probably the mucin type linked to GalNAc.</text>
</comment>
<comment type="disease" evidence="8 9 11 13 23 24 32 34 35">
    <disease id="DI-00487">
        <name>Factor XII deficiency</name>
        <acronym>FA12D</acronym>
        <description>An asymptomatic anomaly of in vitro blood coagulation. Its diagnosis is based on finding a low plasma activity of the factor in coagulating assays. It is usually only accidentally discovered through pre-operative blood tests. Factor XII deficiency is divided into two categories, a cross-reacting material (CRM)-negative group (negative F12 antigen detection) and a CRM-positive group (positive F12 antigen detection).</description>
        <dbReference type="MIM" id="234000"/>
    </disease>
    <text>The disease is caused by variants affecting the gene represented in this entry.</text>
</comment>
<comment type="disease" evidence="17 18">
    <disease id="DI-00544">
        <name>Angioedema, hereditary, 3</name>
        <acronym>HAE3</acronym>
        <description>A hereditary angioedema occurring only in women. Hereditary angioedema is an autosomal dominant disorder characterized by episodic local swelling involving subcutaneous or submucous tissue of the upper respiratory and gastrointestinal tracts, face, extremities, and genitalia. Hereditary angioedema type 3 differs from types 1 and 2 in that both concentration and function of C1 esterase inhibitor are normal. Hereditary angioedema type 3 is precipitated or worsened by high estrogen levels (e.g., during pregnancy or treatment with oral contraceptives).</description>
        <dbReference type="MIM" id="610618"/>
    </disease>
    <text>The disease is caused by variants affecting the gene represented in this entry.</text>
</comment>
<comment type="similarity">
    <text evidence="4">Belongs to the peptidase S1 family.</text>
</comment>
<comment type="online information" name="Wikipedia">
    <link uri="https://en.wikipedia.org/wiki/Factor_XII"/>
    <text>Factor XII entry</text>
</comment>
<evidence type="ECO:0000250" key="1"/>
<evidence type="ECO:0000255" key="2">
    <source>
        <dbReference type="PROSITE-ProRule" id="PRU00076"/>
    </source>
</evidence>
<evidence type="ECO:0000255" key="3">
    <source>
        <dbReference type="PROSITE-ProRule" id="PRU00121"/>
    </source>
</evidence>
<evidence type="ECO:0000255" key="4">
    <source>
        <dbReference type="PROSITE-ProRule" id="PRU00274"/>
    </source>
</evidence>
<evidence type="ECO:0000255" key="5">
    <source>
        <dbReference type="PROSITE-ProRule" id="PRU00478"/>
    </source>
</evidence>
<evidence type="ECO:0000255" key="6">
    <source>
        <dbReference type="PROSITE-ProRule" id="PRU00479"/>
    </source>
</evidence>
<evidence type="ECO:0000256" key="7">
    <source>
        <dbReference type="SAM" id="MobiDB-lite"/>
    </source>
</evidence>
<evidence type="ECO:0000269" key="8">
    <source>
    </source>
</evidence>
<evidence type="ECO:0000269" key="9">
    <source>
    </source>
</evidence>
<evidence type="ECO:0000269" key="10">
    <source>
    </source>
</evidence>
<evidence type="ECO:0000269" key="11">
    <source>
    </source>
</evidence>
<evidence type="ECO:0000269" key="12">
    <source>
    </source>
</evidence>
<evidence type="ECO:0000269" key="13">
    <source>
    </source>
</evidence>
<evidence type="ECO:0000269" key="14">
    <source>
    </source>
</evidence>
<evidence type="ECO:0000269" key="15">
    <source>
    </source>
</evidence>
<evidence type="ECO:0000269" key="16">
    <source>
    </source>
</evidence>
<evidence type="ECO:0000269" key="17">
    <source>
    </source>
</evidence>
<evidence type="ECO:0000269" key="18">
    <source>
    </source>
</evidence>
<evidence type="ECO:0000269" key="19">
    <source>
    </source>
</evidence>
<evidence type="ECO:0000269" key="20">
    <source>
    </source>
</evidence>
<evidence type="ECO:0000269" key="21">
    <source>
    </source>
</evidence>
<evidence type="ECO:0000269" key="22">
    <source>
    </source>
</evidence>
<evidence type="ECO:0000269" key="23">
    <source>
    </source>
</evidence>
<evidence type="ECO:0000269" key="24">
    <source>
    </source>
</evidence>
<evidence type="ECO:0000269" key="25">
    <source>
    </source>
</evidence>
<evidence type="ECO:0000269" key="26">
    <source>
    </source>
</evidence>
<evidence type="ECO:0000269" key="27">
    <source>
    </source>
</evidence>
<evidence type="ECO:0000269" key="28">
    <source>
    </source>
</evidence>
<evidence type="ECO:0000269" key="29">
    <source>
    </source>
</evidence>
<evidence type="ECO:0000269" key="30">
    <source>
    </source>
</evidence>
<evidence type="ECO:0000269" key="31">
    <source>
    </source>
</evidence>
<evidence type="ECO:0000269" key="32">
    <source>
    </source>
</evidence>
<evidence type="ECO:0000269" key="33">
    <source>
    </source>
</evidence>
<evidence type="ECO:0000269" key="34">
    <source>
    </source>
</evidence>
<evidence type="ECO:0000269" key="35">
    <source>
    </source>
</evidence>
<evidence type="ECO:0000269" key="36">
    <source ref="2"/>
</evidence>
<evidence type="ECO:0000305" key="37"/>
<evidence type="ECO:0007829" key="38">
    <source>
        <dbReference type="PDB" id="4BDX"/>
    </source>
</evidence>
<evidence type="ECO:0007829" key="39">
    <source>
        <dbReference type="PDB" id="4XDE"/>
    </source>
</evidence>
<evidence type="ECO:0007829" key="40">
    <source>
        <dbReference type="PDB" id="4XE4"/>
    </source>
</evidence>
<evidence type="ECO:0007829" key="41">
    <source>
        <dbReference type="PDB" id="6SZW"/>
    </source>
</evidence>
<evidence type="ECO:0007829" key="42">
    <source>
        <dbReference type="PDB" id="6X0T"/>
    </source>
</evidence>
<evidence type="ECO:0007829" key="43">
    <source>
        <dbReference type="PDB" id="7PRJ"/>
    </source>
</evidence>
<evidence type="ECO:0007829" key="44">
    <source>
        <dbReference type="PDB" id="8OS5"/>
    </source>
</evidence>
<evidence type="ECO:0007829" key="45">
    <source>
        <dbReference type="PDB" id="8R8D"/>
    </source>
</evidence>
<feature type="signal peptide" evidence="31">
    <location>
        <begin position="1"/>
        <end position="19"/>
    </location>
</feature>
<feature type="chain" id="PRO_0000027833" description="Coagulation factor XIIa heavy chain">
    <location>
        <begin position="20"/>
        <end position="372"/>
    </location>
</feature>
<feature type="chain" id="PRO_0000027834" description="Beta-factor XIIa part 1">
    <location>
        <begin position="354"/>
        <end position="362"/>
    </location>
</feature>
<feature type="chain" id="PRO_0000027835" description="Coagulation factor XIIa light chain">
    <location>
        <begin position="373"/>
        <end position="615"/>
    </location>
</feature>
<feature type="domain" description="Fibronectin type-II" evidence="5 6">
    <location>
        <begin position="42"/>
        <end position="90"/>
    </location>
</feature>
<feature type="domain" description="EGF-like 1" evidence="2">
    <location>
        <begin position="94"/>
        <end position="131"/>
    </location>
</feature>
<feature type="domain" description="Fibronectin type-I" evidence="5">
    <location>
        <begin position="133"/>
        <end position="173"/>
    </location>
</feature>
<feature type="domain" description="EGF-like 2" evidence="2">
    <location>
        <begin position="174"/>
        <end position="210"/>
    </location>
</feature>
<feature type="domain" description="Kringle" evidence="3">
    <location>
        <begin position="217"/>
        <end position="295"/>
    </location>
</feature>
<feature type="domain" description="Peptidase S1" evidence="4">
    <location>
        <begin position="373"/>
        <end position="614"/>
    </location>
</feature>
<feature type="region of interest" description="Disordered" evidence="7">
    <location>
        <begin position="298"/>
        <end position="359"/>
    </location>
</feature>
<feature type="compositionally biased region" description="Pro residues" evidence="7">
    <location>
        <begin position="317"/>
        <end position="326"/>
    </location>
</feature>
<feature type="compositionally biased region" description="Low complexity" evidence="7">
    <location>
        <begin position="327"/>
        <end position="338"/>
    </location>
</feature>
<feature type="active site" description="Charge relay system" evidence="1">
    <location>
        <position position="412"/>
    </location>
</feature>
<feature type="active site" description="Charge relay system" evidence="1">
    <location>
        <position position="461"/>
    </location>
</feature>
<feature type="active site" description="Charge relay system" evidence="1">
    <location>
        <position position="563"/>
    </location>
</feature>
<feature type="glycosylation site" description="O-linked (Fuc) threonine" evidence="12">
    <location>
        <position position="109"/>
    </location>
</feature>
<feature type="glycosylation site" description="N-linked (GlcNAc...) asparagine" evidence="16 30 31">
    <location>
        <position position="249"/>
    </location>
</feature>
<feature type="glycosylation site" description="O-linked (GalNAc...) threonine" evidence="31">
    <location>
        <position position="299"/>
    </location>
</feature>
<feature type="glycosylation site" description="O-linked (GalNAc...) threonine" evidence="31">
    <location>
        <position position="305"/>
    </location>
</feature>
<feature type="glycosylation site" description="O-linked (GalNAc...) serine" evidence="31">
    <location>
        <position position="308"/>
    </location>
</feature>
<feature type="glycosylation site" description="O-linked (GalNAc...) threonine" evidence="31">
    <location>
        <position position="328"/>
    </location>
</feature>
<feature type="glycosylation site" description="O-linked (GalNAc...) threonine" evidence="31">
    <location>
        <position position="329"/>
    </location>
</feature>
<feature type="glycosylation site" description="O-linked (GalNAc...) threonine" evidence="31">
    <location>
        <position position="337"/>
    </location>
</feature>
<feature type="glycosylation site" description="N-linked (GlcNAc...) asparagine" evidence="10 16">
    <location>
        <position position="433"/>
    </location>
</feature>
<feature type="disulfide bond" evidence="1">
    <location>
        <begin position="47"/>
        <end position="73"/>
    </location>
</feature>
<feature type="disulfide bond" evidence="1">
    <location>
        <begin position="61"/>
        <end position="88"/>
    </location>
</feature>
<feature type="disulfide bond" evidence="1">
    <location>
        <begin position="98"/>
        <end position="110"/>
    </location>
</feature>
<feature type="disulfide bond" evidence="1">
    <location>
        <begin position="104"/>
        <end position="119"/>
    </location>
</feature>
<feature type="disulfide bond" evidence="1">
    <location>
        <begin position="121"/>
        <end position="130"/>
    </location>
</feature>
<feature type="disulfide bond" evidence="22">
    <location>
        <begin position="135"/>
        <end position="163"/>
    </location>
</feature>
<feature type="disulfide bond" evidence="22">
    <location>
        <begin position="161"/>
        <end position="170"/>
    </location>
</feature>
<feature type="disulfide bond" evidence="22">
    <location>
        <begin position="178"/>
        <end position="189"/>
    </location>
</feature>
<feature type="disulfide bond" evidence="22">
    <location>
        <begin position="183"/>
        <end position="198"/>
    </location>
</feature>
<feature type="disulfide bond" evidence="22">
    <location>
        <begin position="200"/>
        <end position="209"/>
    </location>
</feature>
<feature type="disulfide bond" evidence="1">
    <location>
        <begin position="217"/>
        <end position="295"/>
    </location>
</feature>
<feature type="disulfide bond" evidence="1">
    <location>
        <begin position="238"/>
        <end position="277"/>
    </location>
</feature>
<feature type="disulfide bond" evidence="1">
    <location>
        <begin position="266"/>
        <end position="290"/>
    </location>
</feature>
<feature type="disulfide bond" evidence="1">
    <location>
        <begin position="359"/>
        <end position="486"/>
    </location>
</feature>
<feature type="disulfide bond" evidence="1">
    <location>
        <begin position="397"/>
        <end position="413"/>
    </location>
</feature>
<feature type="disulfide bond" evidence="1">
    <location>
        <begin position="405"/>
        <end position="475"/>
    </location>
</feature>
<feature type="disulfide bond" evidence="1">
    <location>
        <begin position="436"/>
        <end position="439"/>
    </location>
</feature>
<feature type="disulfide bond" evidence="1">
    <location>
        <begin position="500"/>
        <end position="569"/>
    </location>
</feature>
<feature type="disulfide bond" evidence="1">
    <location>
        <begin position="532"/>
        <end position="548"/>
    </location>
</feature>
<feature type="disulfide bond" evidence="1">
    <location>
        <begin position="559"/>
        <end position="590"/>
    </location>
</feature>
<feature type="sequence variant" id="VAR_014426" description="In FA12D; Tenri; inactive; dbSNP:rs118204455." evidence="8">
    <original>Y</original>
    <variation>C</variation>
    <location>
        <position position="53"/>
    </location>
</feature>
<feature type="sequence variant" id="VAR_031500" description="In FA12D; CRM-negative phenotype; low levels of accumulation in the cell; not secreted." evidence="9">
    <original>R</original>
    <variation>P</variation>
    <location>
        <position position="142"/>
    </location>
</feature>
<feature type="sequence variant" id="VAR_014336" description="In dbSNP:rs17876030." evidence="25 26 29 30 31 36">
    <original>A</original>
    <variation>P</variation>
    <location>
        <position position="207"/>
    </location>
</feature>
<feature type="sequence variant" id="VAR_031501" description="In HAE3; dbSNP:rs118204456." evidence="17 18">
    <original>T</original>
    <variation>K</variation>
    <location>
        <position position="328"/>
    </location>
</feature>
<feature type="sequence variant" id="VAR_031502" description="In HAE3; dbSNP:rs118204456." evidence="17">
    <original>T</original>
    <variation>R</variation>
    <location>
        <position position="328"/>
    </location>
</feature>
<feature type="sequence variant" id="VAR_029191" description="In dbSNP:rs2230939.">
    <original>P</original>
    <variation>Q</variation>
    <location>
        <position position="342"/>
    </location>
</feature>
<feature type="sequence variant" id="VAR_006623" description="In FA12D; Locarno; inactive; dbSNP:rs118204454." evidence="32">
    <original>R</original>
    <variation>P</variation>
    <location>
        <position position="372"/>
    </location>
</feature>
<feature type="sequence variant" id="VAR_031503" description="In FA12D; Shizuoka; CRM-negative phenotype; transcribed and synthesized at wild-type levels; not secreted; dbSNP:rs865853663." evidence="13">
    <original>A</original>
    <variation>T</variation>
    <location>
        <position position="411"/>
    </location>
</feature>
<feature type="sequence variant" id="VAR_031504" description="In FA12D; CRM-negative phenotype." evidence="35">
    <original>L</original>
    <variation>M</variation>
    <location>
        <position position="414"/>
    </location>
</feature>
<feature type="sequence variant" id="VAR_031505" description="In FA12D; CRM-negative phenotype; dbSNP:rs932430490." evidence="35">
    <original>R</original>
    <variation>Q</variation>
    <location>
        <position position="417"/>
    </location>
</feature>
<feature type="sequence variant" id="VAR_031506" description="In FA12D; CRM-negative phenotype; accumulation in the cell; low secretion; dbSNP:rs1763197852." evidence="9">
    <original>Q</original>
    <variation>K</variation>
    <location>
        <position position="440"/>
    </location>
</feature>
<feature type="sequence variant" id="VAR_031507" description="In FA12D; CRM-positive phenotype." evidence="35">
    <original>D</original>
    <variation>N</variation>
    <location>
        <position position="461"/>
    </location>
</feature>
<feature type="sequence variant" id="VAR_031508" description="In FA12D; CRM-negative phenotype; transcribed and synthesized at wild-type levels; not secreted; dbSNP:rs1763186543." evidence="11">
    <original>W</original>
    <variation>C</variation>
    <location>
        <position position="505"/>
    </location>
</feature>
<feature type="sequence variant" id="VAR_014337" description="In dbSNP:rs17876034." evidence="36">
    <original>G</original>
    <variation>D</variation>
    <location>
        <position position="545"/>
    </location>
</feature>
<feature type="sequence variant" id="VAR_031509" description="In FA12D; CRM-positive phenotype; dbSNP:rs766505234." evidence="34 35">
    <original>G</original>
    <variation>R</variation>
    <location>
        <position position="589"/>
    </location>
</feature>
<feature type="sequence variant" id="VAR_006624" description="In FA12D; Washington D.C.; inactive; dbSNP:rs1157280571." evidence="23">
    <original>C</original>
    <variation>S</variation>
    <location>
        <position position="590"/>
    </location>
</feature>
<feature type="sequence variant" id="VAR_014338" description="In dbSNP:rs17876035." evidence="36">
    <original>Y</original>
    <variation>H</variation>
    <location>
        <position position="605"/>
    </location>
</feature>
<feature type="sequence conflict" description="In Ref. 5; AAA51986." evidence="37" ref="5">
    <original>P</original>
    <variation>S</variation>
    <location>
        <position position="333"/>
    </location>
</feature>
<feature type="sequence conflict" description="In Ref. 6; AAA70224." evidence="37" ref="6">
    <original>A</original>
    <variation>G</variation>
    <location>
        <position position="379"/>
    </location>
</feature>
<feature type="helix" evidence="41">
    <location>
        <begin position="42"/>
        <end position="44"/>
    </location>
</feature>
<feature type="strand" evidence="43">
    <location>
        <begin position="49"/>
        <end position="53"/>
    </location>
</feature>
<feature type="strand" evidence="43">
    <location>
        <begin position="56"/>
        <end position="60"/>
    </location>
</feature>
<feature type="strand" evidence="43">
    <location>
        <begin position="72"/>
        <end position="78"/>
    </location>
</feature>
<feature type="helix" evidence="43">
    <location>
        <begin position="79"/>
        <end position="82"/>
    </location>
</feature>
<feature type="strand" evidence="43">
    <location>
        <begin position="85"/>
        <end position="88"/>
    </location>
</feature>
<feature type="helix" evidence="44">
    <location>
        <begin position="97"/>
        <end position="100"/>
    </location>
</feature>
<feature type="strand" evidence="44">
    <location>
        <begin position="104"/>
        <end position="106"/>
    </location>
</feature>
<feature type="strand" evidence="44">
    <location>
        <begin position="108"/>
        <end position="113"/>
    </location>
</feature>
<feature type="strand" evidence="44">
    <location>
        <begin position="116"/>
        <end position="120"/>
    </location>
</feature>
<feature type="helix" evidence="44">
    <location>
        <begin position="128"/>
        <end position="130"/>
    </location>
</feature>
<feature type="strand" evidence="38">
    <location>
        <begin position="135"/>
        <end position="137"/>
    </location>
</feature>
<feature type="turn" evidence="38">
    <location>
        <begin position="138"/>
        <end position="141"/>
    </location>
</feature>
<feature type="strand" evidence="38">
    <location>
        <begin position="142"/>
        <end position="144"/>
    </location>
</feature>
<feature type="strand" evidence="38">
    <location>
        <begin position="149"/>
        <end position="153"/>
    </location>
</feature>
<feature type="strand" evidence="38">
    <location>
        <begin position="158"/>
        <end position="163"/>
    </location>
</feature>
<feature type="strand" evidence="38">
    <location>
        <begin position="165"/>
        <end position="173"/>
    </location>
</feature>
<feature type="strand" evidence="38">
    <location>
        <begin position="188"/>
        <end position="192"/>
    </location>
</feature>
<feature type="strand" evidence="38">
    <location>
        <begin position="195"/>
        <end position="199"/>
    </location>
</feature>
<feature type="strand" evidence="38">
    <location>
        <begin position="204"/>
        <end position="206"/>
    </location>
</feature>
<feature type="strand" evidence="44">
    <location>
        <begin position="211"/>
        <end position="214"/>
    </location>
</feature>
<feature type="strand" evidence="44">
    <location>
        <begin position="217"/>
        <end position="224"/>
    </location>
</feature>
<feature type="turn" evidence="44">
    <location>
        <begin position="244"/>
        <end position="246"/>
    </location>
</feature>
<feature type="turn" evidence="44">
    <location>
        <begin position="252"/>
        <end position="256"/>
    </location>
</feature>
<feature type="strand" evidence="44">
    <location>
        <begin position="276"/>
        <end position="283"/>
    </location>
</feature>
<feature type="strand" evidence="44">
    <location>
        <begin position="285"/>
        <end position="290"/>
    </location>
</feature>
<feature type="strand" evidence="39">
    <location>
        <begin position="380"/>
        <end position="383"/>
    </location>
</feature>
<feature type="strand" evidence="42">
    <location>
        <begin position="387"/>
        <end position="392"/>
    </location>
</feature>
<feature type="strand" evidence="42">
    <location>
        <begin position="395"/>
        <end position="403"/>
    </location>
</feature>
<feature type="strand" evidence="42">
    <location>
        <begin position="406"/>
        <end position="409"/>
    </location>
</feature>
<feature type="helix" evidence="42">
    <location>
        <begin position="411"/>
        <end position="414"/>
    </location>
</feature>
<feature type="helix" evidence="42">
    <location>
        <begin position="420"/>
        <end position="422"/>
    </location>
</feature>
<feature type="strand" evidence="42">
    <location>
        <begin position="424"/>
        <end position="428"/>
    </location>
</feature>
<feature type="strand" evidence="42">
    <location>
        <begin position="430"/>
        <end position="434"/>
    </location>
</feature>
<feature type="strand" evidence="42">
    <location>
        <begin position="440"/>
        <end position="449"/>
    </location>
</feature>
<feature type="turn" evidence="42">
    <location>
        <begin position="455"/>
        <end position="457"/>
    </location>
</feature>
<feature type="strand" evidence="42">
    <location>
        <begin position="463"/>
        <end position="467"/>
    </location>
</feature>
<feature type="turn" evidence="40">
    <location>
        <begin position="471"/>
        <end position="473"/>
    </location>
</feature>
<feature type="strand" evidence="39">
    <location>
        <begin position="490"/>
        <end position="492"/>
    </location>
</feature>
<feature type="strand" evidence="42">
    <location>
        <begin position="500"/>
        <end position="506"/>
    </location>
</feature>
<feature type="helix" evidence="39">
    <location>
        <begin position="513"/>
        <end position="515"/>
    </location>
</feature>
<feature type="strand" evidence="42">
    <location>
        <begin position="520"/>
        <end position="523"/>
    </location>
</feature>
<feature type="helix" evidence="42">
    <location>
        <begin position="529"/>
        <end position="532"/>
    </location>
</feature>
<feature type="turn" evidence="42">
    <location>
        <begin position="535"/>
        <end position="538"/>
    </location>
</feature>
<feature type="helix" evidence="42">
    <location>
        <begin position="539"/>
        <end position="541"/>
    </location>
</feature>
<feature type="strand" evidence="42">
    <location>
        <begin position="546"/>
        <end position="550"/>
    </location>
</feature>
<feature type="strand" evidence="45">
    <location>
        <begin position="555"/>
        <end position="557"/>
    </location>
</feature>
<feature type="turn" evidence="39">
    <location>
        <begin position="558"/>
        <end position="560"/>
    </location>
</feature>
<feature type="strand" evidence="42">
    <location>
        <begin position="566"/>
        <end position="570"/>
    </location>
</feature>
<feature type="helix" evidence="42">
    <location>
        <begin position="572"/>
        <end position="574"/>
    </location>
</feature>
<feature type="strand" evidence="42">
    <location>
        <begin position="578"/>
        <end position="586"/>
    </location>
</feature>
<feature type="strand" evidence="42">
    <location>
        <begin position="588"/>
        <end position="591"/>
    </location>
</feature>
<feature type="strand" evidence="42">
    <location>
        <begin position="597"/>
        <end position="601"/>
    </location>
</feature>
<feature type="helix" evidence="42">
    <location>
        <begin position="602"/>
        <end position="605"/>
    </location>
</feature>
<feature type="helix" evidence="42">
    <location>
        <begin position="606"/>
        <end position="612"/>
    </location>
</feature>
<reference key="1">
    <citation type="journal article" date="1987" name="J. Biol. Chem.">
        <title>Characterization of the human blood coagulation factor XII gene. Intron/exon gene organization and analysis of the 5'-flanking region.</title>
        <authorList>
            <person name="Cool D.E."/>
            <person name="McGillivray R.T.A."/>
        </authorList>
    </citation>
    <scope>NUCLEOTIDE SEQUENCE [GENOMIC DNA]</scope>
    <scope>VARIANT PRO-207</scope>
</reference>
<reference key="2">
    <citation type="submission" date="2002-08" db="EMBL/GenBank/DDBJ databases">
        <authorList>
            <consortium name="SeattleSNPs variation discovery resource"/>
        </authorList>
    </citation>
    <scope>NUCLEOTIDE SEQUENCE [GENOMIC DNA]</scope>
    <scope>VARIANTS PRO-207; ASP-545 AND HIS-605</scope>
</reference>
<reference key="3">
    <citation type="journal article" date="2004" name="Nature">
        <title>The DNA sequence and comparative analysis of human chromosome 5.</title>
        <authorList>
            <person name="Schmutz J."/>
            <person name="Martin J."/>
            <person name="Terry A."/>
            <person name="Couronne O."/>
            <person name="Grimwood J."/>
            <person name="Lowry S."/>
            <person name="Gordon L.A."/>
            <person name="Scott D."/>
            <person name="Xie G."/>
            <person name="Huang W."/>
            <person name="Hellsten U."/>
            <person name="Tran-Gyamfi M."/>
            <person name="She X."/>
            <person name="Prabhakar S."/>
            <person name="Aerts A."/>
            <person name="Altherr M."/>
            <person name="Bajorek E."/>
            <person name="Black S."/>
            <person name="Branscomb E."/>
            <person name="Caoile C."/>
            <person name="Challacombe J.F."/>
            <person name="Chan Y.M."/>
            <person name="Denys M."/>
            <person name="Detter J.C."/>
            <person name="Escobar J."/>
            <person name="Flowers D."/>
            <person name="Fotopulos D."/>
            <person name="Glavina T."/>
            <person name="Gomez M."/>
            <person name="Gonzales E."/>
            <person name="Goodstein D."/>
            <person name="Grigoriev I."/>
            <person name="Groza M."/>
            <person name="Hammon N."/>
            <person name="Hawkins T."/>
            <person name="Haydu L."/>
            <person name="Israni S."/>
            <person name="Jett J."/>
            <person name="Kadner K."/>
            <person name="Kimball H."/>
            <person name="Kobayashi A."/>
            <person name="Lopez F."/>
            <person name="Lou Y."/>
            <person name="Martinez D."/>
            <person name="Medina C."/>
            <person name="Morgan J."/>
            <person name="Nandkeshwar R."/>
            <person name="Noonan J.P."/>
            <person name="Pitluck S."/>
            <person name="Pollard M."/>
            <person name="Predki P."/>
            <person name="Priest J."/>
            <person name="Ramirez L."/>
            <person name="Retterer J."/>
            <person name="Rodriguez A."/>
            <person name="Rogers S."/>
            <person name="Salamov A."/>
            <person name="Salazar A."/>
            <person name="Thayer N."/>
            <person name="Tice H."/>
            <person name="Tsai M."/>
            <person name="Ustaszewska A."/>
            <person name="Vo N."/>
            <person name="Wheeler J."/>
            <person name="Wu K."/>
            <person name="Yang J."/>
            <person name="Dickson M."/>
            <person name="Cheng J.-F."/>
            <person name="Eichler E.E."/>
            <person name="Olsen A."/>
            <person name="Pennacchio L.A."/>
            <person name="Rokhsar D.S."/>
            <person name="Richardson P."/>
            <person name="Lucas S.M."/>
            <person name="Myers R.M."/>
            <person name="Rubin E.M."/>
        </authorList>
    </citation>
    <scope>NUCLEOTIDE SEQUENCE [LARGE SCALE GENOMIC DNA]</scope>
</reference>
<reference key="4">
    <citation type="journal article" date="1986" name="Nucleic Acids Res.">
        <title>cDNA sequence coding for human coagulation factor XII (Hageman).</title>
        <authorList>
            <person name="Tripodi M."/>
            <person name="Citarella F."/>
            <person name="Guida S."/>
            <person name="Galeffi P."/>
            <person name="Fantoni A."/>
            <person name="Cortese R."/>
        </authorList>
    </citation>
    <scope>NUCLEOTIDE SEQUENCE [MRNA] OF 4-615</scope>
    <scope>VARIANT PRO-207</scope>
</reference>
<reference key="5">
    <citation type="journal article" date="1985" name="J. Biol. Chem.">
        <title>Characterization of human blood coagulation factor XII cDNA. Prediction of the primary structure of factor XII and the tertiary structure of beta-factor XIIa.</title>
        <authorList>
            <person name="Cool D.E."/>
            <person name="Edgell C.-J.S."/>
            <person name="Louie G.V."/>
            <person name="Zoller M.J."/>
            <person name="Brayer G.D."/>
            <person name="McGillivray R.T.A."/>
        </authorList>
    </citation>
    <scope>NUCLEOTIDE SEQUENCE [MRNA] OF 14-615</scope>
    <scope>VARIANT PRO-207</scope>
</reference>
<reference key="6">
    <citation type="journal article" date="1986" name="Biochemistry">
        <title>Characterization of a cDNA coding for human factor XII (Hageman factor).</title>
        <authorList>
            <person name="Que B.G."/>
            <person name="Davie E.W."/>
        </authorList>
    </citation>
    <scope>NUCLEOTIDE SEQUENCE [MRNA] OF 146-615</scope>
    <scope>VARIANT PRO-207</scope>
</reference>
<reference key="7">
    <citation type="journal article" date="1985" name="J. Biol. Chem.">
        <title>Amino acid sequence of the heavy chain of human alpha-factor XIIa (activated Hageman factor).</title>
        <authorList>
            <person name="McMullen B.A."/>
            <person name="Fujikawa K."/>
        </authorList>
    </citation>
    <scope>PROTEIN SEQUENCE OF 20-379</scope>
    <scope>GLYCOSYLATION AT ASN-249; THR-299; THR-305; SER-308; THR-328; THR-329 AND THR-337</scope>
    <scope>VARIANT PRO-207</scope>
</reference>
<reference key="8">
    <citation type="journal article" date="1983" name="J. Biol. Chem.">
        <title>Amino acid sequence of human beta-factor XIIa.</title>
        <authorList>
            <person name="Fujikawa K."/>
            <person name="McMullen B.A."/>
        </authorList>
    </citation>
    <scope>PROTEIN SEQUENCE OF 354-362 AND 373-615</scope>
</reference>
<reference key="9">
    <citation type="journal article" date="1995" name="Hum. Mol. Genet.">
        <title>The novel acceptor splice site mutation 11396(G--&gt;A) in the factor XII gene causes a truncated transcript in cross-reacting material negative patients.</title>
        <authorList>
            <person name="Schloesser M."/>
            <person name="Hofferbert S."/>
            <person name="Bartz U."/>
            <person name="Lutze G."/>
            <person name="Lammle B."/>
            <person name="Engel W."/>
        </authorList>
    </citation>
    <scope>NUCLEOTIDE SEQUENCE [GENOMIC DNA] OF 561-615</scope>
    <scope>VARIANT FA12D ARG-589</scope>
    <source>
        <tissue>Blood</tissue>
    </source>
</reference>
<reference key="10">
    <citation type="journal article" date="1991" name="J. Biol. Chem.">
        <title>Activation of human blood coagulation factor XI independent of factor XII. Factor XI is activated by thrombin and factor XIa in the presence of negatively charged surfaces.</title>
        <authorList>
            <person name="Naito K."/>
            <person name="Fujikawa K."/>
        </authorList>
    </citation>
    <scope>FUNCTION</scope>
    <scope>CATALYTIC ACTIVITY</scope>
</reference>
<reference key="11">
    <citation type="journal article" date="1992" name="J. Biol. Chem.">
        <title>O-linked fucose is present in the first epidermal growth factor domain of factor XII but not protein C.</title>
        <authorList>
            <person name="Harris R.J."/>
            <person name="Ling V.T."/>
            <person name="Spellman M.W."/>
        </authorList>
    </citation>
    <scope>GLYCOSYLATION AT THR-109</scope>
</reference>
<reference key="12">
    <citation type="journal article" date="1993" name="Blood">
        <title>Activation of factor XI in plasma is dependent on factor XII.</title>
        <authorList>
            <person name="Brunnee T."/>
            <person name="La Porta C."/>
            <person name="Reddigari S.R."/>
            <person name="Salerno V.M."/>
            <person name="Kaplan A.P."/>
            <person name="Silverberg M."/>
        </authorList>
    </citation>
    <scope>FUNCTION</scope>
    <scope>CATALYTIC ACTIVITY</scope>
    <scope>ACTIVITY REGULATION</scope>
</reference>
<reference key="13">
    <citation type="journal article" date="2004" name="Proteomics">
        <title>Screening for N-glycosylated proteins by liquid chromatography mass spectrometry.</title>
        <authorList>
            <person name="Bunkenborg J."/>
            <person name="Pilch B.J."/>
            <person name="Podtelejnikov A.V."/>
            <person name="Wisniewski J.R."/>
        </authorList>
    </citation>
    <scope>GLYCOSYLATION [LARGE SCALE ANALYSIS] AT ASN-433</scope>
    <source>
        <tissue>Plasma</tissue>
    </source>
</reference>
<reference key="14">
    <citation type="journal article" date="2005" name="J. Proteome Res.">
        <title>Human plasma N-glycoproteome analysis by immunoaffinity subtraction, hydrazide chemistry, and mass spectrometry.</title>
        <authorList>
            <person name="Liu T."/>
            <person name="Qian W.-J."/>
            <person name="Gritsenko M.A."/>
            <person name="Camp D.G. II"/>
            <person name="Monroe M.E."/>
            <person name="Moore R.J."/>
            <person name="Smith R.D."/>
        </authorList>
    </citation>
    <scope>GLYCOSYLATION [LARGE SCALE ANALYSIS] AT ASN-249 AND ASN-433</scope>
    <source>
        <tissue>Plasma</tissue>
    </source>
</reference>
<reference key="15">
    <citation type="journal article" date="1987" name="Blood">
        <title>Factor XII gene alteration in Hageman trait detected by TaqI restriction enzyme.</title>
        <authorList>
            <person name="Bernardi F."/>
            <person name="Marchetti G."/>
            <person name="Patracchini P."/>
            <person name="del Senno L."/>
            <person name="Tripodi M."/>
            <person name="Fantoni A."/>
            <person name="Bartolai S."/>
            <person name="Vannini F."/>
            <person name="Felloni L."/>
            <person name="Rossi L."/>
            <person name="Panicucci F."/>
            <person name="Conconi F."/>
        </authorList>
    </citation>
    <scope>INVOLVEMENT IN FA12D</scope>
</reference>
<reference key="16">
    <citation type="journal article" date="2005" name="J. Biochem.">
        <title>Contribution of the N-terminal and C-terminal domains of haemaphysalin to inhibition of activation of plasma kallikrein-kinin system.</title>
        <authorList>
            <person name="Kato N."/>
            <person name="Okayama T."/>
            <person name="Isawa H."/>
            <person name="Yuda M."/>
            <person name="Chinzei Y."/>
            <person name="Iwanaga S."/>
        </authorList>
    </citation>
    <scope>INTERACTION WITH TICK HAEMAPHYSALIN</scope>
</reference>
<reference key="17">
    <citation type="journal article" date="2005" name="Thromb. Haemost.">
        <title>Identification and characterization of the plasma kallikrein-kinin system inhibitor, haemaphysalin, from hard tick, Haemaphysalis longicornis.</title>
        <authorList>
            <person name="Kato N."/>
            <person name="Iwanaga S."/>
            <person name="Okayama T."/>
            <person name="Isawa H."/>
            <person name="Yuda M."/>
            <person name="Chinzei Y."/>
        </authorList>
    </citation>
    <scope>INTERACTION WITH TICK HAEMAPHYSALIN</scope>
</reference>
<reference key="18">
    <citation type="journal article" date="2007" name="FEBS J.">
        <title>Identification and characterization of plasma kallikrein-kinin system inhibitors from salivary glands of the blood-sucking insect Triatoma infestans.</title>
        <authorList>
            <person name="Isawa H."/>
            <person name="Orito Y."/>
            <person name="Jingushi N."/>
            <person name="Iwanaga S."/>
            <person name="Morita A."/>
            <person name="Chinzei Y."/>
            <person name="Yuda M."/>
        </authorList>
    </citation>
    <scope>INTERACTION WITH MOSQUITO SHORT FORM SALIVARY PROTEIN D7R1; ASSASSIN BUG TRIAFESTIN-1 AND ASSASSIN BUG TRIAFESTIN-2</scope>
</reference>
<reference key="19">
    <citation type="journal article" date="2011" name="Blood">
        <title>Histidine-rich glycoprotein binds factor XIIa with high affinity and inhibits contact-initiated coagulation.</title>
        <authorList>
            <person name="Macquarrie J.L."/>
            <person name="Stafford A.R."/>
            <person name="Yau J.W."/>
            <person name="Leslie B.A."/>
            <person name="Vu T.T."/>
            <person name="Fredenburgh J.C."/>
            <person name="Weitz J.I."/>
        </authorList>
    </citation>
    <scope>FUNCTION</scope>
    <scope>INTERACTION WITH HRG</scope>
</reference>
<reference key="20">
    <citation type="journal article" date="2014" name="J. Proteomics">
        <title>An enzyme assisted RP-RPLC approach for in-depth analysis of human liver phosphoproteome.</title>
        <authorList>
            <person name="Bian Y."/>
            <person name="Song C."/>
            <person name="Cheng K."/>
            <person name="Dong M."/>
            <person name="Wang F."/>
            <person name="Huang J."/>
            <person name="Sun D."/>
            <person name="Wang L."/>
            <person name="Ye M."/>
            <person name="Zou H."/>
        </authorList>
    </citation>
    <scope>IDENTIFICATION BY MASS SPECTROMETRY [LARGE SCALE ANALYSIS]</scope>
    <source>
        <tissue>Liver</tissue>
    </source>
</reference>
<reference key="21">
    <citation type="journal article" date="2021" name="Int. J. Mol. Sci.">
        <title>Ixodes ricinus Salivary Serpin Iripin-8 Inhibits the Intrinsic Pathway of Coagulation and Complement.</title>
        <authorList>
            <person name="Kotal J."/>
            <person name="Polderdijk S.G.I."/>
            <person name="Langhansova H."/>
            <person name="Ederova M."/>
            <person name="Martins L.A."/>
            <person name="Berankova Z."/>
            <person name="Chlastakova A."/>
            <person name="Hajdusek O."/>
            <person name="Kotsyfakis M."/>
            <person name="Huntington J.A."/>
            <person name="Chmelar J."/>
        </authorList>
    </citation>
    <scope>INTERACTION WITH TICK IRIPIN-8</scope>
</reference>
<reference key="22">
    <citation type="journal article" date="2022" name="J. Biol. Chem.">
        <title>Novel salivary antihemostatic activities of long-form D7 proteins from the malaria vector Anopheles gambiae facilitate hematophagy.</title>
        <authorList>
            <person name="Smith L.B."/>
            <person name="Duge E."/>
            <person name="Valenzuela-Leon P.C."/>
            <person name="Brooks S."/>
            <person name="Martin-Martin I."/>
            <person name="Ackerman H."/>
            <person name="Calvo E."/>
        </authorList>
    </citation>
    <scope>INTERACTION WITH MOSQUITO D7L2</scope>
</reference>
<reference key="23">
    <citation type="journal article" date="2013" name="Acta Crystallogr. F">
        <title>The structure of the FnI-EGF-like tandem domain of coagulation factor XII solved using SIRAS.</title>
        <authorList>
            <person name="Beringer D.X."/>
            <person name="Kroon-Batenburg L.M."/>
        </authorList>
    </citation>
    <scope>X-RAY CRYSTALLOGRAPHY (1.62 ANGSTROMS) OF 133-213</scope>
    <scope>DISULFIDE BONDS</scope>
</reference>
<reference key="24">
    <citation type="journal article" date="1989" name="Proc. Natl. Acad. Sci. U.S.A.">
        <title>Coagulation factor XII (Hageman factor) Washington D.C.: inactive factor XIIa results from Cys-571--&gt;Ser substitution.</title>
        <authorList>
            <person name="Miyata T."/>
            <person name="Kawabata S."/>
            <person name="Iwanaga S."/>
            <person name="Takahashi I."/>
            <person name="Alving B."/>
            <person name="Saito H."/>
        </authorList>
    </citation>
    <scope>VARIANT FA12D SER-590</scope>
</reference>
<reference key="25">
    <citation type="journal article" date="1994" name="Blood">
        <title>Coagulation factor XII Locarno: the functional defect is caused by the amino acid substitution Arg-353--&gt;Pro leading to loss of a kallikrein cleavage site.</title>
        <authorList>
            <person name="Hovinga J.K."/>
            <person name="Schaller J."/>
            <person name="Stricker H."/>
            <person name="Wuillemin W.A."/>
            <person name="Furlan M."/>
            <person name="Laemmle B."/>
        </authorList>
    </citation>
    <scope>VARIANT FA12D PRO-372</scope>
</reference>
<reference key="26">
    <citation type="journal article" date="1997" name="Blood">
        <title>Mutations in the human factor XII gene.</title>
        <authorList>
            <person name="Schloesser M."/>
            <person name="Zeerleder S."/>
            <person name="Lutze G."/>
            <person name="Halbmayer W.-M."/>
            <person name="Hofferbert S."/>
            <person name="Hinney B."/>
            <person name="Koestering H."/>
            <person name="Laemmle B."/>
            <person name="Pindur G."/>
            <person name="Thies K."/>
            <person name="Koehler M."/>
            <person name="Engel W."/>
        </authorList>
    </citation>
    <scope>VARIANTS FA12D MET-414; GLN-417; ASN-461 AND ARG-589</scope>
</reference>
<reference key="27">
    <citation type="journal article" date="1999" name="Blood">
        <title>Factor XII Tenri, a novel cross-reacting material negative factor XII deficiency, occurs through a proteasome-mediated degradation.</title>
        <authorList>
            <person name="Kondo S."/>
            <person name="Tokunaga F."/>
            <person name="Kawano S."/>
            <person name="Oono Y."/>
            <person name="Kumagai S."/>
            <person name="Koide T."/>
        </authorList>
    </citation>
    <scope>VARIANT FA12D CYS-53</scope>
</reference>
<reference key="28">
    <citation type="journal article" date="2001" name="Thromb. Haemost.">
        <title>Identification and characterization of two novel mutations (Q421K and R123P) in congenital factor XII deficiency.</title>
        <authorList>
            <person name="Kanaji T."/>
            <person name="Kanaji S."/>
            <person name="Osaki K."/>
            <person name="Kuroiwa M."/>
            <person name="Sakaguchi M."/>
            <person name="Mihara K."/>
            <person name="Niho Y."/>
            <person name="Okamura T."/>
        </authorList>
    </citation>
    <scope>VARIANTS FA12D PRO-142 AND LYS-440</scope>
    <scope>CHARACTERIZATION OF VARIANTS FA12D PRO-142 AND LYS-440</scope>
</reference>
<reference key="29">
    <citation type="journal article" date="2004" name="Blood Coagul. Fibrinolysis">
        <title>Genetic analyses and expression studies identified a novel mutation (W486C) as a molecular basis of congenital coagulation factor XII deficiency.</title>
        <authorList>
            <person name="Ishii K."/>
            <person name="Oguchi S."/>
            <person name="Moriki T."/>
            <person name="Yatabe Y."/>
            <person name="Takeshita E."/>
            <person name="Murata M."/>
            <person name="Ikeda Y."/>
            <person name="Watanabe K."/>
        </authorList>
    </citation>
    <scope>VARIANT FA12D CYS-505</scope>
    <scope>CHARACTERIZATION OF VARIANT FA12D CYS-505</scope>
</reference>
<reference key="30">
    <citation type="journal article" date="2005" name="Thromb. Res.">
        <title>Factor XII Shizuoka, a novel mutation (Ala392Thr) identified and characterized in a patient with congenital coagulation factor XII deficiency.</title>
        <authorList>
            <person name="Oguchi S."/>
            <person name="Ishii K."/>
            <person name="Moriki T."/>
            <person name="Takeshita E."/>
            <person name="Murata M."/>
            <person name="Ikeda Y."/>
            <person name="Watanabe K."/>
        </authorList>
    </citation>
    <scope>VARIANT FA12D THR-411</scope>
    <scope>CHARACTERIZATION OF VARIANT FA12D THR-411</scope>
</reference>
<reference key="31">
    <citation type="journal article" date="2006" name="Biochem. Biophys. Res. Commun.">
        <title>Missense mutations in the coagulation factor XII (Hageman factor) gene in hereditary angioedema with normal C1 inhibitor.</title>
        <authorList>
            <person name="Dewald G."/>
            <person name="Bork K."/>
        </authorList>
    </citation>
    <scope>VARIANTS HAE3 LYS-328 AND ARG-328</scope>
</reference>
<reference key="32">
    <citation type="journal article" date="2006" name="Am. J. Hum. Genet.">
        <title>Increased activity of coagulation factor XII (Hageman factor) causes hereditary angioedema type III.</title>
        <authorList>
            <person name="Cichon S."/>
            <person name="Martin L."/>
            <person name="Hennies H.C."/>
            <person name="Mueller F."/>
            <person name="Van Driessche K."/>
            <person name="Karpushova A."/>
            <person name="Stevens W."/>
            <person name="Colombo R."/>
            <person name="Renne T."/>
            <person name="Drouet C."/>
            <person name="Bork K."/>
            <person name="Noethen M.M."/>
        </authorList>
    </citation>
    <scope>VARIANT HAE3 LYS-328</scope>
</reference>
<name>FA12_HUMAN</name>
<proteinExistence type="evidence at protein level"/>
<gene>
    <name type="primary">F12</name>
</gene>
<dbReference type="EC" id="3.4.21.38" evidence="20 33"/>
<dbReference type="EMBL" id="M17466">
    <property type="protein sequence ID" value="AAB59490.1"/>
    <property type="molecule type" value="Genomic_DNA"/>
</dbReference>
<dbReference type="EMBL" id="M17464">
    <property type="protein sequence ID" value="AAB59490.1"/>
    <property type="status" value="JOINED"/>
    <property type="molecule type" value="Genomic_DNA"/>
</dbReference>
<dbReference type="EMBL" id="M17465">
    <property type="protein sequence ID" value="AAB59490.1"/>
    <property type="status" value="JOINED"/>
    <property type="molecule type" value="Genomic_DNA"/>
</dbReference>
<dbReference type="EMBL" id="AF538691">
    <property type="protein sequence ID" value="AAM97932.1"/>
    <property type="molecule type" value="Genomic_DNA"/>
</dbReference>
<dbReference type="EMBL" id="AC145098">
    <property type="status" value="NOT_ANNOTATED_CDS"/>
    <property type="molecule type" value="Genomic_DNA"/>
</dbReference>
<dbReference type="EMBL" id="M31315">
    <property type="protein sequence ID" value="AAA70225.1"/>
    <property type="molecule type" value="mRNA"/>
</dbReference>
<dbReference type="EMBL" id="M11723">
    <property type="protein sequence ID" value="AAA51986.1"/>
    <property type="molecule type" value="mRNA"/>
</dbReference>
<dbReference type="EMBL" id="M13147">
    <property type="protein sequence ID" value="AAA70224.1"/>
    <property type="molecule type" value="mRNA"/>
</dbReference>
<dbReference type="EMBL" id="U71274">
    <property type="protein sequence ID" value="AAB51203.1"/>
    <property type="molecule type" value="Genomic_DNA"/>
</dbReference>
<dbReference type="CCDS" id="CCDS34302.1"/>
<dbReference type="PIR" id="A29411">
    <property type="entry name" value="KFHU12"/>
</dbReference>
<dbReference type="RefSeq" id="NP_000496.2">
    <property type="nucleotide sequence ID" value="NM_000505.4"/>
</dbReference>
<dbReference type="PDB" id="4BDW">
    <property type="method" value="X-ray"/>
    <property type="resolution" value="2.50 A"/>
    <property type="chains" value="A=133-215"/>
</dbReference>
<dbReference type="PDB" id="4BDX">
    <property type="method" value="X-ray"/>
    <property type="resolution" value="1.62 A"/>
    <property type="chains" value="A=133-213"/>
</dbReference>
<dbReference type="PDB" id="4XDE">
    <property type="method" value="X-ray"/>
    <property type="resolution" value="2.14 A"/>
    <property type="chains" value="A=373-615"/>
</dbReference>
<dbReference type="PDB" id="4XE4">
    <property type="method" value="X-ray"/>
    <property type="resolution" value="2.40 A"/>
    <property type="chains" value="A=373-615"/>
</dbReference>
<dbReference type="PDB" id="6B74">
    <property type="method" value="X-ray"/>
    <property type="resolution" value="2.32 A"/>
    <property type="chains" value="A=354-362, B=373-615"/>
</dbReference>
<dbReference type="PDB" id="6B77">
    <property type="method" value="X-ray"/>
    <property type="resolution" value="2.37 A"/>
    <property type="chains" value="A=354-362, B=373-615"/>
</dbReference>
<dbReference type="PDB" id="6GT6">
    <property type="method" value="X-ray"/>
    <property type="resolution" value="2.54 A"/>
    <property type="chains" value="B=373-615"/>
</dbReference>
<dbReference type="PDB" id="6L63">
    <property type="method" value="X-ray"/>
    <property type="resolution" value="3.00 A"/>
    <property type="chains" value="A/C=373-615"/>
</dbReference>
<dbReference type="PDB" id="6QF7">
    <property type="method" value="X-ray"/>
    <property type="resolution" value="4.00 A"/>
    <property type="chains" value="B/D=352-615"/>
</dbReference>
<dbReference type="PDB" id="6SZW">
    <property type="method" value="X-ray"/>
    <property type="resolution" value="3.14 A"/>
    <property type="chains" value="D=20-90"/>
</dbReference>
<dbReference type="PDB" id="6X0S">
    <property type="method" value="X-ray"/>
    <property type="resolution" value="1.90 A"/>
    <property type="chains" value="A/B/C=357-615"/>
</dbReference>
<dbReference type="PDB" id="6X0T">
    <property type="method" value="X-ray"/>
    <property type="resolution" value="1.39 A"/>
    <property type="chains" value="A/B/C=357-615"/>
</dbReference>
<dbReference type="PDB" id="7FBP">
    <property type="method" value="X-ray"/>
    <property type="resolution" value="1.99 A"/>
    <property type="chains" value="A=373-613"/>
</dbReference>
<dbReference type="PDB" id="7PRJ">
    <property type="method" value="X-ray"/>
    <property type="resolution" value="1.20 A"/>
    <property type="chains" value="A=20-90"/>
</dbReference>
<dbReference type="PDB" id="7PRK">
    <property type="method" value="X-ray"/>
    <property type="resolution" value="1.64 A"/>
    <property type="chains" value="A=20-90"/>
</dbReference>
<dbReference type="PDB" id="8OS5">
    <property type="method" value="X-ray"/>
    <property type="resolution" value="3.40 A"/>
    <property type="chains" value="A/B/C=20-314"/>
</dbReference>
<dbReference type="PDB" id="8R8D">
    <property type="method" value="EM"/>
    <property type="resolution" value="2.60 A"/>
    <property type="chains" value="A/B=373-615"/>
</dbReference>
<dbReference type="PDBsum" id="4BDW"/>
<dbReference type="PDBsum" id="4BDX"/>
<dbReference type="PDBsum" id="4XDE"/>
<dbReference type="PDBsum" id="4XE4"/>
<dbReference type="PDBsum" id="6B74"/>
<dbReference type="PDBsum" id="6B77"/>
<dbReference type="PDBsum" id="6GT6"/>
<dbReference type="PDBsum" id="6L63"/>
<dbReference type="PDBsum" id="6QF7"/>
<dbReference type="PDBsum" id="6SZW"/>
<dbReference type="PDBsum" id="6X0S"/>
<dbReference type="PDBsum" id="6X0T"/>
<dbReference type="PDBsum" id="7FBP"/>
<dbReference type="PDBsum" id="7PRJ"/>
<dbReference type="PDBsum" id="7PRK"/>
<dbReference type="PDBsum" id="8OS5"/>
<dbReference type="PDBsum" id="8R8D"/>
<dbReference type="EMDB" id="EMD-18999"/>
<dbReference type="SMR" id="P00748"/>
<dbReference type="BioGRID" id="108459">
    <property type="interactions" value="90"/>
</dbReference>
<dbReference type="ComplexPortal" id="CPX-6209">
    <property type="entry name" value="Coagulation factor XIIa complex"/>
</dbReference>
<dbReference type="FunCoup" id="P00748">
    <property type="interactions" value="184"/>
</dbReference>
<dbReference type="IntAct" id="P00748">
    <property type="interactions" value="63"/>
</dbReference>
<dbReference type="STRING" id="9606.ENSP00000253496"/>
<dbReference type="BindingDB" id="P00748"/>
<dbReference type="ChEMBL" id="CHEMBL2821"/>
<dbReference type="DrugBank" id="DB09228">
    <property type="generic name" value="Conestat alfa"/>
</dbReference>
<dbReference type="DrugBank" id="DB06689">
    <property type="generic name" value="Ethanolamine oleate"/>
</dbReference>
<dbReference type="DrugBank" id="DB06404">
    <property type="generic name" value="Human C1-esterase inhibitor"/>
</dbReference>
<dbReference type="DrugBank" id="DB12598">
    <property type="generic name" value="Nafamostat"/>
</dbReference>
<dbReference type="DrugBank" id="DB01593">
    <property type="generic name" value="Zinc"/>
</dbReference>
<dbReference type="DrugBank" id="DB14487">
    <property type="generic name" value="Zinc acetate"/>
</dbReference>
<dbReference type="DrugCentral" id="P00748"/>
<dbReference type="GuidetoPHARMACOLOGY" id="2361"/>
<dbReference type="MEROPS" id="S01.211"/>
<dbReference type="GlyConnect" id="1121">
    <property type="glycosylation" value="10 N-Linked glycans (2 sites)"/>
</dbReference>
<dbReference type="GlyCosmos" id="P00748">
    <property type="glycosylation" value="12 sites, 14 glycans"/>
</dbReference>
<dbReference type="GlyGen" id="P00748">
    <property type="glycosylation" value="13 sites, 20 N-linked glycans (3 sites), 5 O-linked glycans (6 sites)"/>
</dbReference>
<dbReference type="iPTMnet" id="P00748"/>
<dbReference type="PhosphoSitePlus" id="P00748"/>
<dbReference type="BioMuta" id="F12"/>
<dbReference type="DMDM" id="317373446"/>
<dbReference type="CPTAC" id="non-CPTAC-1100"/>
<dbReference type="CPTAC" id="non-CPTAC-2650"/>
<dbReference type="MassIVE" id="P00748"/>
<dbReference type="PaxDb" id="9606-ENSP00000253496"/>
<dbReference type="PeptideAtlas" id="P00748"/>
<dbReference type="ProteomicsDB" id="51278"/>
<dbReference type="ABCD" id="P00748">
    <property type="antibodies" value="2 sequenced antibodies"/>
</dbReference>
<dbReference type="Antibodypedia" id="864">
    <property type="antibodies" value="875 antibodies from 38 providers"/>
</dbReference>
<dbReference type="DNASU" id="2161"/>
<dbReference type="Ensembl" id="ENST00000253496.4">
    <property type="protein sequence ID" value="ENSP00000253496.3"/>
    <property type="gene ID" value="ENSG00000131187.11"/>
</dbReference>
<dbReference type="GeneID" id="2161"/>
<dbReference type="KEGG" id="hsa:2161"/>
<dbReference type="MANE-Select" id="ENST00000253496.4">
    <property type="protein sequence ID" value="ENSP00000253496.3"/>
    <property type="RefSeq nucleotide sequence ID" value="NM_000505.4"/>
    <property type="RefSeq protein sequence ID" value="NP_000496.2"/>
</dbReference>
<dbReference type="UCSC" id="uc003mgo.5">
    <property type="organism name" value="human"/>
</dbReference>
<dbReference type="AGR" id="HGNC:3530"/>
<dbReference type="CTD" id="2161"/>
<dbReference type="DisGeNET" id="2161"/>
<dbReference type="GeneCards" id="F12"/>
<dbReference type="HGNC" id="HGNC:3530">
    <property type="gene designation" value="F12"/>
</dbReference>
<dbReference type="HPA" id="ENSG00000131187">
    <property type="expression patterns" value="Tissue enriched (liver)"/>
</dbReference>
<dbReference type="MalaCards" id="F12"/>
<dbReference type="MIM" id="234000">
    <property type="type" value="phenotype"/>
</dbReference>
<dbReference type="MIM" id="610618">
    <property type="type" value="phenotype"/>
</dbReference>
<dbReference type="MIM" id="610619">
    <property type="type" value="gene"/>
</dbReference>
<dbReference type="neXtProt" id="NX_P00748"/>
<dbReference type="OpenTargets" id="ENSG00000131187"/>
<dbReference type="Orphanet" id="330">
    <property type="disease" value="Congenital factor XII deficiency"/>
</dbReference>
<dbReference type="Orphanet" id="617919">
    <property type="disease" value="F12-associated cold autoinflammatory syndrome"/>
</dbReference>
<dbReference type="Orphanet" id="100054">
    <property type="disease" value="F12-related hereditary angioedema with normal C1Inh"/>
</dbReference>
<dbReference type="PharmGKB" id="PA161"/>
<dbReference type="VEuPathDB" id="HostDB:ENSG00000131187"/>
<dbReference type="eggNOG" id="KOG1217">
    <property type="taxonomic scope" value="Eukaryota"/>
</dbReference>
<dbReference type="eggNOG" id="KOG3627">
    <property type="taxonomic scope" value="Eukaryota"/>
</dbReference>
<dbReference type="GeneTree" id="ENSGT00940000161657"/>
<dbReference type="HOGENOM" id="CLU_006842_18_1_1"/>
<dbReference type="InParanoid" id="P00748"/>
<dbReference type="OMA" id="GPQPWCA"/>
<dbReference type="OrthoDB" id="9925451at2759"/>
<dbReference type="PAN-GO" id="P00748">
    <property type="GO annotations" value="5 GO annotations based on evolutionary models"/>
</dbReference>
<dbReference type="PhylomeDB" id="P00748"/>
<dbReference type="TreeFam" id="TF329901"/>
<dbReference type="BioCyc" id="MetaCyc:HS05500-MONOMER"/>
<dbReference type="BRENDA" id="3.4.21.38">
    <property type="organism ID" value="2681"/>
</dbReference>
<dbReference type="PathwayCommons" id="P00748"/>
<dbReference type="Reactome" id="R-HSA-140837">
    <property type="pathway name" value="Intrinsic Pathway of Fibrin Clot Formation"/>
</dbReference>
<dbReference type="Reactome" id="R-HSA-9657688">
    <property type="pathway name" value="Defective factor XII causes hereditary angioedema"/>
</dbReference>
<dbReference type="Reactome" id="R-HSA-9657689">
    <property type="pathway name" value="Defective SERPING1 causes hereditary angioedema"/>
</dbReference>
<dbReference type="SignaLink" id="P00748"/>
<dbReference type="SIGNOR" id="P00748"/>
<dbReference type="BioGRID-ORCS" id="2161">
    <property type="hits" value="5 hits in 1156 CRISPR screens"/>
</dbReference>
<dbReference type="EvolutionaryTrace" id="P00748"/>
<dbReference type="GeneWiki" id="Factor_XII"/>
<dbReference type="GenomeRNAi" id="2161"/>
<dbReference type="Pharos" id="P00748">
    <property type="development level" value="Tchem"/>
</dbReference>
<dbReference type="PRO" id="PR:P00748"/>
<dbReference type="Proteomes" id="UP000005640">
    <property type="component" value="Chromosome 5"/>
</dbReference>
<dbReference type="RNAct" id="P00748">
    <property type="molecule type" value="protein"/>
</dbReference>
<dbReference type="Bgee" id="ENSG00000131187">
    <property type="expression patterns" value="Expressed in right lobe of liver and 131 other cell types or tissues"/>
</dbReference>
<dbReference type="GO" id="GO:0062023">
    <property type="term" value="C:collagen-containing extracellular matrix"/>
    <property type="evidence" value="ECO:0007005"/>
    <property type="project" value="BHF-UCL"/>
</dbReference>
<dbReference type="GO" id="GO:0070062">
    <property type="term" value="C:extracellular exosome"/>
    <property type="evidence" value="ECO:0007005"/>
    <property type="project" value="UniProtKB"/>
</dbReference>
<dbReference type="GO" id="GO:0005576">
    <property type="term" value="C:extracellular region"/>
    <property type="evidence" value="ECO:0000304"/>
    <property type="project" value="Reactome"/>
</dbReference>
<dbReference type="GO" id="GO:0005615">
    <property type="term" value="C:extracellular space"/>
    <property type="evidence" value="ECO:0000314"/>
    <property type="project" value="BHF-UCL"/>
</dbReference>
<dbReference type="GO" id="GO:0005886">
    <property type="term" value="C:plasma membrane"/>
    <property type="evidence" value="ECO:0000304"/>
    <property type="project" value="Reactome"/>
</dbReference>
<dbReference type="GO" id="GO:0005791">
    <property type="term" value="C:rough endoplasmic reticulum"/>
    <property type="evidence" value="ECO:0000318"/>
    <property type="project" value="GO_Central"/>
</dbReference>
<dbReference type="GO" id="GO:0005509">
    <property type="term" value="F:calcium ion binding"/>
    <property type="evidence" value="ECO:0007669"/>
    <property type="project" value="InterPro"/>
</dbReference>
<dbReference type="GO" id="GO:0051787">
    <property type="term" value="F:misfolded protein binding"/>
    <property type="evidence" value="ECO:0000305"/>
    <property type="project" value="BHF-UCL"/>
</dbReference>
<dbReference type="GO" id="GO:0004252">
    <property type="term" value="F:serine-type endopeptidase activity"/>
    <property type="evidence" value="ECO:0000314"/>
    <property type="project" value="BHF-UCL"/>
</dbReference>
<dbReference type="GO" id="GO:0007596">
    <property type="term" value="P:blood coagulation"/>
    <property type="evidence" value="ECO:0000318"/>
    <property type="project" value="GO_Central"/>
</dbReference>
<dbReference type="GO" id="GO:0007597">
    <property type="term" value="P:blood coagulation, intrinsic pathway"/>
    <property type="evidence" value="ECO:0000305"/>
    <property type="project" value="BHF-UCL"/>
</dbReference>
<dbReference type="GO" id="GO:0002542">
    <property type="term" value="P:Factor XII activation"/>
    <property type="evidence" value="ECO:0000314"/>
    <property type="project" value="BHF-UCL"/>
</dbReference>
<dbReference type="GO" id="GO:0042730">
    <property type="term" value="P:fibrinolysis"/>
    <property type="evidence" value="ECO:0007669"/>
    <property type="project" value="UniProtKB-KW"/>
</dbReference>
<dbReference type="GO" id="GO:0045087">
    <property type="term" value="P:innate immune response"/>
    <property type="evidence" value="ECO:0000304"/>
    <property type="project" value="BHF-UCL"/>
</dbReference>
<dbReference type="GO" id="GO:0002353">
    <property type="term" value="P:plasma kallikrein-kinin cascade"/>
    <property type="evidence" value="ECO:0000314"/>
    <property type="project" value="BHF-UCL"/>
</dbReference>
<dbReference type="GO" id="GO:0030194">
    <property type="term" value="P:positive regulation of blood coagulation"/>
    <property type="evidence" value="ECO:0000314"/>
    <property type="project" value="BHF-UCL"/>
</dbReference>
<dbReference type="GO" id="GO:0051919">
    <property type="term" value="P:positive regulation of fibrinolysis"/>
    <property type="evidence" value="ECO:0000314"/>
    <property type="project" value="BHF-UCL"/>
</dbReference>
<dbReference type="GO" id="GO:0010756">
    <property type="term" value="P:positive regulation of plasminogen activation"/>
    <property type="evidence" value="ECO:0000314"/>
    <property type="project" value="BHF-UCL"/>
</dbReference>
<dbReference type="GO" id="GO:0016540">
    <property type="term" value="P:protein autoprocessing"/>
    <property type="evidence" value="ECO:0000314"/>
    <property type="project" value="BHF-UCL"/>
</dbReference>
<dbReference type="GO" id="GO:0016485">
    <property type="term" value="P:protein processing"/>
    <property type="evidence" value="ECO:0000314"/>
    <property type="project" value="BHF-UCL"/>
</dbReference>
<dbReference type="GO" id="GO:0051788">
    <property type="term" value="P:response to misfolded protein"/>
    <property type="evidence" value="ECO:0000314"/>
    <property type="project" value="BHF-UCL"/>
</dbReference>
<dbReference type="GO" id="GO:0031638">
    <property type="term" value="P:zymogen activation"/>
    <property type="evidence" value="ECO:0000314"/>
    <property type="project" value="BHF-UCL"/>
</dbReference>
<dbReference type="CDD" id="cd00054">
    <property type="entry name" value="EGF_CA"/>
    <property type="match status" value="2"/>
</dbReference>
<dbReference type="CDD" id="cd00061">
    <property type="entry name" value="FN1"/>
    <property type="match status" value="1"/>
</dbReference>
<dbReference type="CDD" id="cd00062">
    <property type="entry name" value="FN2"/>
    <property type="match status" value="1"/>
</dbReference>
<dbReference type="CDD" id="cd00108">
    <property type="entry name" value="KR"/>
    <property type="match status" value="1"/>
</dbReference>
<dbReference type="CDD" id="cd00190">
    <property type="entry name" value="Tryp_SPc"/>
    <property type="match status" value="1"/>
</dbReference>
<dbReference type="FunFam" id="2.10.10.10:FF:000010">
    <property type="entry name" value="Coagulation factor XII"/>
    <property type="match status" value="1"/>
</dbReference>
<dbReference type="FunFam" id="2.10.25.10:FF:000576">
    <property type="entry name" value="Coagulation factor XII"/>
    <property type="match status" value="1"/>
</dbReference>
<dbReference type="FunFam" id="2.40.10.10:FF:000097">
    <property type="entry name" value="Coagulation factor XII"/>
    <property type="match status" value="1"/>
</dbReference>
<dbReference type="FunFam" id="2.40.10.10:FF:000098">
    <property type="entry name" value="Coagulation factor XII"/>
    <property type="match status" value="1"/>
</dbReference>
<dbReference type="FunFam" id="2.40.20.10:FF:000016">
    <property type="entry name" value="Coagulation factor XII"/>
    <property type="match status" value="1"/>
</dbReference>
<dbReference type="FunFam" id="2.10.25.10:FF:000338">
    <property type="entry name" value="hepatocyte growth factor activator"/>
    <property type="match status" value="1"/>
</dbReference>
<dbReference type="Gene3D" id="2.10.10.10">
    <property type="entry name" value="Fibronectin, type II, collagen-binding"/>
    <property type="match status" value="1"/>
</dbReference>
<dbReference type="Gene3D" id="2.10.25.10">
    <property type="entry name" value="Laminin"/>
    <property type="match status" value="2"/>
</dbReference>
<dbReference type="Gene3D" id="2.40.20.10">
    <property type="entry name" value="Plasminogen Kringle 4"/>
    <property type="match status" value="1"/>
</dbReference>
<dbReference type="Gene3D" id="2.40.10.10">
    <property type="entry name" value="Trypsin-like serine proteases"/>
    <property type="match status" value="2"/>
</dbReference>
<dbReference type="InterPro" id="IPR014394">
    <property type="entry name" value="Coagulation_fac_XII/HGFA"/>
</dbReference>
<dbReference type="InterPro" id="IPR001881">
    <property type="entry name" value="EGF-like_Ca-bd_dom"/>
</dbReference>
<dbReference type="InterPro" id="IPR000742">
    <property type="entry name" value="EGF-like_dom"/>
</dbReference>
<dbReference type="InterPro" id="IPR000083">
    <property type="entry name" value="Fibronectin_type1"/>
</dbReference>
<dbReference type="InterPro" id="IPR000562">
    <property type="entry name" value="FN_type2_dom"/>
</dbReference>
<dbReference type="InterPro" id="IPR036943">
    <property type="entry name" value="FN_type2_sf"/>
</dbReference>
<dbReference type="InterPro" id="IPR000001">
    <property type="entry name" value="Kringle"/>
</dbReference>
<dbReference type="InterPro" id="IPR013806">
    <property type="entry name" value="Kringle-like"/>
</dbReference>
<dbReference type="InterPro" id="IPR018056">
    <property type="entry name" value="Kringle_CS"/>
</dbReference>
<dbReference type="InterPro" id="IPR038178">
    <property type="entry name" value="Kringle_sf"/>
</dbReference>
<dbReference type="InterPro" id="IPR009003">
    <property type="entry name" value="Peptidase_S1_PA"/>
</dbReference>
<dbReference type="InterPro" id="IPR043504">
    <property type="entry name" value="Peptidase_S1_PA_chymotrypsin"/>
</dbReference>
<dbReference type="InterPro" id="IPR001314">
    <property type="entry name" value="Peptidase_S1A"/>
</dbReference>
<dbReference type="InterPro" id="IPR050127">
    <property type="entry name" value="Serine_Proteases_S1"/>
</dbReference>
<dbReference type="InterPro" id="IPR001254">
    <property type="entry name" value="Trypsin_dom"/>
</dbReference>
<dbReference type="InterPro" id="IPR018114">
    <property type="entry name" value="TRYPSIN_HIS"/>
</dbReference>
<dbReference type="InterPro" id="IPR033116">
    <property type="entry name" value="TRYPSIN_SER"/>
</dbReference>
<dbReference type="PANTHER" id="PTHR24264:SF46">
    <property type="entry name" value="COAGULATION FACTOR XII"/>
    <property type="match status" value="1"/>
</dbReference>
<dbReference type="PANTHER" id="PTHR24264">
    <property type="entry name" value="TRYPSIN-RELATED"/>
    <property type="match status" value="1"/>
</dbReference>
<dbReference type="Pfam" id="PF00008">
    <property type="entry name" value="EGF"/>
    <property type="match status" value="2"/>
</dbReference>
<dbReference type="Pfam" id="PF00039">
    <property type="entry name" value="fn1"/>
    <property type="match status" value="1"/>
</dbReference>
<dbReference type="Pfam" id="PF00040">
    <property type="entry name" value="fn2"/>
    <property type="match status" value="1"/>
</dbReference>
<dbReference type="Pfam" id="PF00051">
    <property type="entry name" value="Kringle"/>
    <property type="match status" value="1"/>
</dbReference>
<dbReference type="Pfam" id="PF00089">
    <property type="entry name" value="Trypsin"/>
    <property type="match status" value="1"/>
</dbReference>
<dbReference type="PIRSF" id="PIRSF001146">
    <property type="entry name" value="Factor_XII_HGFA"/>
    <property type="match status" value="1"/>
</dbReference>
<dbReference type="PRINTS" id="PR00722">
    <property type="entry name" value="CHYMOTRYPSIN"/>
</dbReference>
<dbReference type="PRINTS" id="PR00013">
    <property type="entry name" value="FNTYPEII"/>
</dbReference>
<dbReference type="PRINTS" id="PR00018">
    <property type="entry name" value="KRINGLE"/>
</dbReference>
<dbReference type="SMART" id="SM00181">
    <property type="entry name" value="EGF"/>
    <property type="match status" value="2"/>
</dbReference>
<dbReference type="SMART" id="SM00179">
    <property type="entry name" value="EGF_CA"/>
    <property type="match status" value="2"/>
</dbReference>
<dbReference type="SMART" id="SM00058">
    <property type="entry name" value="FN1"/>
    <property type="match status" value="1"/>
</dbReference>
<dbReference type="SMART" id="SM00059">
    <property type="entry name" value="FN2"/>
    <property type="match status" value="1"/>
</dbReference>
<dbReference type="SMART" id="SM00130">
    <property type="entry name" value="KR"/>
    <property type="match status" value="1"/>
</dbReference>
<dbReference type="SMART" id="SM00020">
    <property type="entry name" value="Tryp_SPc"/>
    <property type="match status" value="1"/>
</dbReference>
<dbReference type="SUPFAM" id="SSF57196">
    <property type="entry name" value="EGF/Laminin"/>
    <property type="match status" value="1"/>
</dbReference>
<dbReference type="SUPFAM" id="SSF57440">
    <property type="entry name" value="Kringle-like"/>
    <property type="match status" value="2"/>
</dbReference>
<dbReference type="SUPFAM" id="SSF50494">
    <property type="entry name" value="Trypsin-like serine proteases"/>
    <property type="match status" value="1"/>
</dbReference>
<dbReference type="PROSITE" id="PS00022">
    <property type="entry name" value="EGF_1"/>
    <property type="match status" value="2"/>
</dbReference>
<dbReference type="PROSITE" id="PS01186">
    <property type="entry name" value="EGF_2"/>
    <property type="match status" value="1"/>
</dbReference>
<dbReference type="PROSITE" id="PS50026">
    <property type="entry name" value="EGF_3"/>
    <property type="match status" value="2"/>
</dbReference>
<dbReference type="PROSITE" id="PS01253">
    <property type="entry name" value="FN1_1"/>
    <property type="match status" value="1"/>
</dbReference>
<dbReference type="PROSITE" id="PS51091">
    <property type="entry name" value="FN1_2"/>
    <property type="match status" value="1"/>
</dbReference>
<dbReference type="PROSITE" id="PS00023">
    <property type="entry name" value="FN2_1"/>
    <property type="match status" value="1"/>
</dbReference>
<dbReference type="PROSITE" id="PS51092">
    <property type="entry name" value="FN2_2"/>
    <property type="match status" value="1"/>
</dbReference>
<dbReference type="PROSITE" id="PS00021">
    <property type="entry name" value="KRINGLE_1"/>
    <property type="match status" value="1"/>
</dbReference>
<dbReference type="PROSITE" id="PS50070">
    <property type="entry name" value="KRINGLE_2"/>
    <property type="match status" value="1"/>
</dbReference>
<dbReference type="PROSITE" id="PS50240">
    <property type="entry name" value="TRYPSIN_DOM"/>
    <property type="match status" value="1"/>
</dbReference>
<dbReference type="PROSITE" id="PS00134">
    <property type="entry name" value="TRYPSIN_HIS"/>
    <property type="match status" value="1"/>
</dbReference>
<dbReference type="PROSITE" id="PS00135">
    <property type="entry name" value="TRYPSIN_SER"/>
    <property type="match status" value="1"/>
</dbReference>
<sequence length="615" mass="67792">MRALLLLGFLLVSLESTLSIPPWEAPKEHKYKAEEHTVVLTVTGEPCHFPFQYHRQLYHKCTHKGRPGPQPWCATTPNFDQDQRWGYCLEPKKVKDHCSKHSPCQKGGTCVNMPSGPHCLCPQHLTGNHCQKEKCFEPQLLRFFHKNEIWYRTEQAAVARCQCKGPDAHCQRLASQACRTNPCLHGGRCLEVEGHRLCHCPVGYTGAFCDVDTKASCYDGRGLSYRGLARTTLSGAPCQPWASEATYRNVTAEQARNWGLGGHAFCRNPDNDIRPWCFVLNRDRLSWEYCDLAQCQTPTQAAPPTPVSPRLHVPLMPAQPAPPKPQPTTRTPPQSQTPGALPAKREQPPSLTRNGPLSCGQRLRKSLSSMTRVVGGLVALRGAHPYIAALYWGHSFCAGSLIAPCWVLTAAHCLQDRPAPEDLTVVLGQERRNHSCEPCQTLAVRSYRLHEAFSPVSYQHDLALLRLQEDADGSCALLSPYVQPVCLPSGAARPSETTLCQVAGWGHQFEGAEEYASFLQEAQVPFLSLERCSAPDVHGSSILPGMLCAGFLEGGTDACQGDSGGPLVCEDQAAERRLTLQGIISWGSGCGDRNKPGVYTDVAYYLAWIREHTVS</sequence>
<keyword id="KW-0002">3D-structure</keyword>
<keyword id="KW-0094">Blood coagulation</keyword>
<keyword id="KW-0903">Direct protein sequencing</keyword>
<keyword id="KW-0225">Disease variant</keyword>
<keyword id="KW-1015">Disulfide bond</keyword>
<keyword id="KW-0245">EGF-like domain</keyword>
<keyword id="KW-0280">Fibrinolysis</keyword>
<keyword id="KW-0325">Glycoprotein</keyword>
<keyword id="KW-0356">Hemostasis</keyword>
<keyword id="KW-0378">Hydrolase</keyword>
<keyword id="KW-0420">Kringle</keyword>
<keyword id="KW-0645">Protease</keyword>
<keyword id="KW-1267">Proteomics identification</keyword>
<keyword id="KW-1185">Reference proteome</keyword>
<keyword id="KW-0677">Repeat</keyword>
<keyword id="KW-0964">Secreted</keyword>
<keyword id="KW-0720">Serine protease</keyword>
<keyword id="KW-0732">Signal</keyword>
<keyword id="KW-0865">Zymogen</keyword>
<protein>
    <recommendedName>
        <fullName>Coagulation factor XII</fullName>
        <ecNumber evidence="20 33">3.4.21.38</ecNumber>
    </recommendedName>
    <alternativeName>
        <fullName>Hageman factor</fullName>
        <shortName>HAF</shortName>
    </alternativeName>
    <component>
        <recommendedName>
            <fullName>Coagulation factor XIIa heavy chain</fullName>
        </recommendedName>
    </component>
    <component>
        <recommendedName>
            <fullName>Beta-factor XIIa part 1</fullName>
        </recommendedName>
    </component>
    <component>
        <recommendedName>
            <fullName>Coagulation factor XIIa light chain</fullName>
        </recommendedName>
        <alternativeName>
            <fullName>Beta-factor XIIa part 2</fullName>
        </alternativeName>
    </component>
</protein>